<reference key="1">
    <citation type="journal article" date="1995" name="Nucleic Acids Res.">
        <title>Analysis of the Escherichia coli genome VI: DNA sequence of the region from 92.8 through 100 minutes.</title>
        <authorList>
            <person name="Burland V.D."/>
            <person name="Plunkett G. III"/>
            <person name="Sofia H.J."/>
            <person name="Daniels D.L."/>
            <person name="Blattner F.R."/>
        </authorList>
    </citation>
    <scope>NUCLEOTIDE SEQUENCE [LARGE SCALE GENOMIC DNA]</scope>
    <source>
        <strain>K12 / MG1655 / ATCC 47076</strain>
    </source>
</reference>
<reference key="2">
    <citation type="journal article" date="1997" name="Science">
        <title>The complete genome sequence of Escherichia coli K-12.</title>
        <authorList>
            <person name="Blattner F.R."/>
            <person name="Plunkett G. III"/>
            <person name="Bloch C.A."/>
            <person name="Perna N.T."/>
            <person name="Burland V."/>
            <person name="Riley M."/>
            <person name="Collado-Vides J."/>
            <person name="Glasner J.D."/>
            <person name="Rode C.K."/>
            <person name="Mayhew G.F."/>
            <person name="Gregor J."/>
            <person name="Davis N.W."/>
            <person name="Kirkpatrick H.A."/>
            <person name="Goeden M.A."/>
            <person name="Rose D.J."/>
            <person name="Mau B."/>
            <person name="Shao Y."/>
        </authorList>
    </citation>
    <scope>NUCLEOTIDE SEQUENCE [LARGE SCALE GENOMIC DNA]</scope>
    <source>
        <strain>K12 / MG1655 / ATCC 47076</strain>
    </source>
</reference>
<reference key="3">
    <citation type="journal article" date="2006" name="Mol. Syst. Biol.">
        <title>Highly accurate genome sequences of Escherichia coli K-12 strains MG1655 and W3110.</title>
        <authorList>
            <person name="Hayashi K."/>
            <person name="Morooka N."/>
            <person name="Yamamoto Y."/>
            <person name="Fujita K."/>
            <person name="Isono K."/>
            <person name="Choi S."/>
            <person name="Ohtsubo E."/>
            <person name="Baba T."/>
            <person name="Wanner B.L."/>
            <person name="Mori H."/>
            <person name="Horiuchi T."/>
        </authorList>
    </citation>
    <scope>NUCLEOTIDE SEQUENCE [LARGE SCALE GENOMIC DNA]</scope>
    <source>
        <strain>K12 / W3110 / ATCC 27325 / DSM 5911</strain>
    </source>
</reference>
<reference key="4">
    <citation type="journal article" date="1999" name="J. Biol. Chem.">
        <title>Purification, cloning, and characterization of the 16S RNA m2G1207 methyltransferase from Escherichia coli.</title>
        <authorList>
            <person name="Tscherne J.S."/>
            <person name="Nurse K."/>
            <person name="Popienick P."/>
            <person name="Ofengand J."/>
        </authorList>
    </citation>
    <scope>PROTEIN SEQUENCE OF 2-20</scope>
    <scope>FUNCTION</scope>
    <scope>CATALYTIC ACTIVITY</scope>
</reference>
<reference key="5">
    <citation type="journal article" date="2007" name="Nucleic Acids Res.">
        <title>Functional specialization of domains tandemly duplicated within 16S rRNA methyltransferase RsmC.</title>
        <authorList>
            <person name="Sunita S."/>
            <person name="Purta E."/>
            <person name="Durawa M."/>
            <person name="Tkaczuk K.L."/>
            <person name="Swaathi J."/>
            <person name="Bujnicki J.M."/>
            <person name="Sivaraman J."/>
        </authorList>
    </citation>
    <scope>X-RAY CRYSTALLOGRAPHY (2.1 ANGSTROMS)</scope>
    <scope>MUTAGENESIS OF LYS-86; LYS-88; ASP-202; ASP-227 AND ASN-268</scope>
    <scope>SUBUNIT</scope>
</reference>
<sequence>MSAFTPASEVLLRHSDDFEQSRILFAGDLQDDLPARLDTAASRAHTQQFHHWQVLSRQMGDNARFSLVATADDVADCDTLIYYWPKNKPEAQFQLMNLLSLLPVGTDIFVVGENRSGVRSAEQMLADYAPLNKVDSARRCGLYFGRLEKQPVFDAEKFWGEYSVDGLTVKTLPGVFSRDGLDVGSQLLLSTLTPHTKGKVLDVGCGAGVLSVAFARHSPKIRLTLCDVSAPAVEASRATLAANGVEGEVFASNVFSEVKGRFDMIISNPPFHDGMQTSLDAAQTLIRGAVRHLNSGGELRIVANAFLPYPDVLDETFGFHEVIAQTGRFKVYRAIMTRQAKKG</sequence>
<feature type="initiator methionine" description="Removed" evidence="2">
    <location>
        <position position="1"/>
    </location>
</feature>
<feature type="chain" id="PRO_0000097490" description="Ribosomal RNA small subunit methyltransferase C">
    <location>
        <begin position="2"/>
        <end position="343"/>
    </location>
</feature>
<feature type="mutagenesis site" description="Reduces activity by 84%; when associated with S-88." evidence="1">
    <original>K</original>
    <variation>S</variation>
    <location>
        <position position="86"/>
    </location>
</feature>
<feature type="mutagenesis site" description="Reduces activity by 84%; when associated with S-86." evidence="1">
    <original>K</original>
    <variation>S</variation>
    <location>
        <position position="88"/>
    </location>
</feature>
<feature type="mutagenesis site" description="Abolishes affinity for S-adenosyl-L-methionine. Loss of activity." evidence="1">
    <original>D</original>
    <variation>A</variation>
    <location>
        <position position="202"/>
    </location>
</feature>
<feature type="mutagenesis site" description="Strongly reduces affinity for S-adenosyl-L-methionine. Reduces activity by 87%." evidence="1">
    <original>D</original>
    <variation>A</variation>
    <location>
        <position position="227"/>
    </location>
</feature>
<feature type="mutagenesis site" description="Reduces affinity for S-adenosyl-L-methionine. Reduces activity by 80%." evidence="1">
    <original>N</original>
    <variation>A</variation>
    <location>
        <position position="268"/>
    </location>
</feature>
<feature type="helix" evidence="4">
    <location>
        <begin position="6"/>
        <end position="12"/>
    </location>
</feature>
<feature type="helix" evidence="4">
    <location>
        <begin position="15"/>
        <end position="18"/>
    </location>
</feature>
<feature type="strand" evidence="4">
    <location>
        <begin position="22"/>
        <end position="27"/>
    </location>
</feature>
<feature type="helix" evidence="4">
    <location>
        <begin position="33"/>
        <end position="36"/>
    </location>
</feature>
<feature type="strand" evidence="4">
    <location>
        <begin position="40"/>
        <end position="48"/>
    </location>
</feature>
<feature type="helix" evidence="4">
    <location>
        <begin position="49"/>
        <end position="59"/>
    </location>
</feature>
<feature type="helix" evidence="4">
    <location>
        <begin position="60"/>
        <end position="62"/>
    </location>
</feature>
<feature type="strand" evidence="4">
    <location>
        <begin position="63"/>
        <end position="65"/>
    </location>
</feature>
<feature type="helix" evidence="4">
    <location>
        <begin position="71"/>
        <end position="74"/>
    </location>
</feature>
<feature type="strand" evidence="4">
    <location>
        <begin position="78"/>
        <end position="83"/>
    </location>
</feature>
<feature type="helix" evidence="4">
    <location>
        <begin position="88"/>
        <end position="99"/>
    </location>
</feature>
<feature type="strand" evidence="4">
    <location>
        <begin position="107"/>
        <end position="113"/>
    </location>
</feature>
<feature type="helix" evidence="4">
    <location>
        <begin position="114"/>
        <end position="116"/>
    </location>
</feature>
<feature type="helix" evidence="4">
    <location>
        <begin position="118"/>
        <end position="120"/>
    </location>
</feature>
<feature type="helix" evidence="4">
    <location>
        <begin position="121"/>
        <end position="125"/>
    </location>
</feature>
<feature type="turn" evidence="4">
    <location>
        <begin position="126"/>
        <end position="128"/>
    </location>
</feature>
<feature type="strand" evidence="4">
    <location>
        <begin position="132"/>
        <end position="134"/>
    </location>
</feature>
<feature type="strand" evidence="4">
    <location>
        <begin position="140"/>
        <end position="146"/>
    </location>
</feature>
<feature type="helix" evidence="4">
    <location>
        <begin position="155"/>
        <end position="158"/>
    </location>
</feature>
<feature type="strand" evidence="4">
    <location>
        <begin position="160"/>
        <end position="164"/>
    </location>
</feature>
<feature type="strand" evidence="4">
    <location>
        <begin position="167"/>
        <end position="171"/>
    </location>
</feature>
<feature type="strand" evidence="4">
    <location>
        <begin position="178"/>
        <end position="180"/>
    </location>
</feature>
<feature type="helix" evidence="4">
    <location>
        <begin position="183"/>
        <end position="191"/>
    </location>
</feature>
<feature type="helix" evidence="4">
    <location>
        <begin position="209"/>
        <end position="217"/>
    </location>
</feature>
<feature type="strand" evidence="4">
    <location>
        <begin position="224"/>
        <end position="229"/>
    </location>
</feature>
<feature type="helix" evidence="4">
    <location>
        <begin position="230"/>
        <end position="242"/>
    </location>
</feature>
<feature type="strand" evidence="4">
    <location>
        <begin position="248"/>
        <end position="251"/>
    </location>
</feature>
<feature type="turn" evidence="4">
    <location>
        <begin position="254"/>
        <end position="257"/>
    </location>
</feature>
<feature type="strand" evidence="4">
    <location>
        <begin position="262"/>
        <end position="267"/>
    </location>
</feature>
<feature type="strand" evidence="4">
    <location>
        <begin position="273"/>
        <end position="275"/>
    </location>
</feature>
<feature type="helix" evidence="4">
    <location>
        <begin position="276"/>
        <end position="289"/>
    </location>
</feature>
<feature type="helix" evidence="4">
    <location>
        <begin position="290"/>
        <end position="292"/>
    </location>
</feature>
<feature type="strand" evidence="4">
    <location>
        <begin position="293"/>
        <end position="304"/>
    </location>
</feature>
<feature type="helix" evidence="4">
    <location>
        <begin position="309"/>
        <end position="317"/>
    </location>
</feature>
<feature type="strand" evidence="4">
    <location>
        <begin position="321"/>
        <end position="325"/>
    </location>
</feature>
<feature type="strand" evidence="4">
    <location>
        <begin position="327"/>
        <end position="335"/>
    </location>
</feature>
<proteinExistence type="evidence at protein level"/>
<keyword id="KW-0002">3D-structure</keyword>
<keyword id="KW-0963">Cytoplasm</keyword>
<keyword id="KW-0903">Direct protein sequencing</keyword>
<keyword id="KW-0460">Magnesium</keyword>
<keyword id="KW-0489">Methyltransferase</keyword>
<keyword id="KW-1185">Reference proteome</keyword>
<keyword id="KW-0698">rRNA processing</keyword>
<keyword id="KW-0949">S-adenosyl-L-methionine</keyword>
<keyword id="KW-0808">Transferase</keyword>
<accession>P39406</accession>
<accession>Q2M5U7</accession>
<dbReference type="EC" id="2.1.1.172" evidence="2"/>
<dbReference type="EMBL" id="U14003">
    <property type="protein sequence ID" value="AAA97267.1"/>
    <property type="molecule type" value="Genomic_DNA"/>
</dbReference>
<dbReference type="EMBL" id="U00096">
    <property type="protein sequence ID" value="AAC77324.1"/>
    <property type="molecule type" value="Genomic_DNA"/>
</dbReference>
<dbReference type="EMBL" id="AP009048">
    <property type="protein sequence ID" value="BAE78359.1"/>
    <property type="molecule type" value="Genomic_DNA"/>
</dbReference>
<dbReference type="PIR" id="S56595">
    <property type="entry name" value="S56595"/>
</dbReference>
<dbReference type="RefSeq" id="NP_418788.1">
    <property type="nucleotide sequence ID" value="NC_000913.3"/>
</dbReference>
<dbReference type="RefSeq" id="WP_001272330.1">
    <property type="nucleotide sequence ID" value="NZ_LN832404.1"/>
</dbReference>
<dbReference type="PDB" id="2PJD">
    <property type="method" value="X-ray"/>
    <property type="resolution" value="2.10 A"/>
    <property type="chains" value="A=1-343"/>
</dbReference>
<dbReference type="PDBsum" id="2PJD"/>
<dbReference type="SMR" id="P39406"/>
<dbReference type="BioGRID" id="4262778">
    <property type="interactions" value="64"/>
</dbReference>
<dbReference type="DIP" id="DIP-10804N"/>
<dbReference type="FunCoup" id="P39406">
    <property type="interactions" value="37"/>
</dbReference>
<dbReference type="IntAct" id="P39406">
    <property type="interactions" value="15"/>
</dbReference>
<dbReference type="STRING" id="511145.b4371"/>
<dbReference type="jPOST" id="P39406"/>
<dbReference type="PaxDb" id="511145-b4371"/>
<dbReference type="EnsemblBacteria" id="AAC77324">
    <property type="protein sequence ID" value="AAC77324"/>
    <property type="gene ID" value="b4371"/>
</dbReference>
<dbReference type="GeneID" id="948892"/>
<dbReference type="KEGG" id="ecj:JW4333"/>
<dbReference type="KEGG" id="eco:b4371"/>
<dbReference type="KEGG" id="ecoc:C3026_23615"/>
<dbReference type="PATRIC" id="fig|1411691.4.peg.2317"/>
<dbReference type="EchoBASE" id="EB2481"/>
<dbReference type="eggNOG" id="COG2813">
    <property type="taxonomic scope" value="Bacteria"/>
</dbReference>
<dbReference type="HOGENOM" id="CLU_049581_0_1_6"/>
<dbReference type="InParanoid" id="P39406"/>
<dbReference type="OMA" id="RHCQLWQ"/>
<dbReference type="OrthoDB" id="9816072at2"/>
<dbReference type="PhylomeDB" id="P39406"/>
<dbReference type="BioCyc" id="EcoCyc:G7950-MONOMER"/>
<dbReference type="BioCyc" id="MetaCyc:G7950-MONOMER"/>
<dbReference type="BRENDA" id="2.1.1.172">
    <property type="organism ID" value="2026"/>
</dbReference>
<dbReference type="EvolutionaryTrace" id="P39406"/>
<dbReference type="PRO" id="PR:P39406"/>
<dbReference type="Proteomes" id="UP000000625">
    <property type="component" value="Chromosome"/>
</dbReference>
<dbReference type="GO" id="GO:0005737">
    <property type="term" value="C:cytoplasm"/>
    <property type="evidence" value="ECO:0000305"/>
    <property type="project" value="UniProtKB"/>
</dbReference>
<dbReference type="GO" id="GO:0005829">
    <property type="term" value="C:cytosol"/>
    <property type="evidence" value="ECO:0000314"/>
    <property type="project" value="EcoCyc"/>
</dbReference>
<dbReference type="GO" id="GO:0052914">
    <property type="term" value="F:16S rRNA (guanine(1207)-N(2))-methyltransferase activity"/>
    <property type="evidence" value="ECO:0000314"/>
    <property type="project" value="EcoCyc"/>
</dbReference>
<dbReference type="GO" id="GO:0003676">
    <property type="term" value="F:nucleic acid binding"/>
    <property type="evidence" value="ECO:0007669"/>
    <property type="project" value="InterPro"/>
</dbReference>
<dbReference type="GO" id="GO:0140691">
    <property type="term" value="F:RNA folding chaperone"/>
    <property type="evidence" value="ECO:0000314"/>
    <property type="project" value="EcoCyc"/>
</dbReference>
<dbReference type="GO" id="GO:0008990">
    <property type="term" value="F:rRNA (guanine-N2-)-methyltransferase activity"/>
    <property type="evidence" value="ECO:0000314"/>
    <property type="project" value="UniProtKB"/>
</dbReference>
<dbReference type="GO" id="GO:0034337">
    <property type="term" value="P:RNA folding"/>
    <property type="evidence" value="ECO:0000314"/>
    <property type="project" value="EcoCyc"/>
</dbReference>
<dbReference type="GO" id="GO:0070475">
    <property type="term" value="P:rRNA base methylation"/>
    <property type="evidence" value="ECO:0000315"/>
    <property type="project" value="EcoCyc"/>
</dbReference>
<dbReference type="GO" id="GO:0031167">
    <property type="term" value="P:rRNA methylation"/>
    <property type="evidence" value="ECO:0000314"/>
    <property type="project" value="UniProtKB"/>
</dbReference>
<dbReference type="CDD" id="cd02440">
    <property type="entry name" value="AdoMet_MTases"/>
    <property type="match status" value="1"/>
</dbReference>
<dbReference type="FunFam" id="3.40.50.150:FF:000058">
    <property type="entry name" value="Ribosomal RNA small subunit methyltransferase C"/>
    <property type="match status" value="1"/>
</dbReference>
<dbReference type="FunFam" id="3.40.50.150:FF:000063">
    <property type="entry name" value="Ribosomal RNA small subunit methyltransferase C"/>
    <property type="match status" value="1"/>
</dbReference>
<dbReference type="Gene3D" id="3.40.50.150">
    <property type="entry name" value="Vaccinia Virus protein VP39"/>
    <property type="match status" value="2"/>
</dbReference>
<dbReference type="HAMAP" id="MF_01862">
    <property type="entry name" value="16SrRNA_methyltr_C"/>
    <property type="match status" value="1"/>
</dbReference>
<dbReference type="InterPro" id="IPR002052">
    <property type="entry name" value="DNA_methylase_N6_adenine_CS"/>
</dbReference>
<dbReference type="InterPro" id="IPR013675">
    <property type="entry name" value="Mtase_sm_N"/>
</dbReference>
<dbReference type="InterPro" id="IPR023543">
    <property type="entry name" value="rRNA_ssu_MeTfrase_C"/>
</dbReference>
<dbReference type="InterPro" id="IPR046977">
    <property type="entry name" value="RsmC/RlmG"/>
</dbReference>
<dbReference type="InterPro" id="IPR029063">
    <property type="entry name" value="SAM-dependent_MTases_sf"/>
</dbReference>
<dbReference type="InterPro" id="IPR007848">
    <property type="entry name" value="Small_mtfrase_dom"/>
</dbReference>
<dbReference type="NCBIfam" id="NF007023">
    <property type="entry name" value="PRK09489.1"/>
    <property type="match status" value="1"/>
</dbReference>
<dbReference type="PANTHER" id="PTHR47816">
    <property type="entry name" value="RIBOSOMAL RNA SMALL SUBUNIT METHYLTRANSFERASE C"/>
    <property type="match status" value="1"/>
</dbReference>
<dbReference type="PANTHER" id="PTHR47816:SF4">
    <property type="entry name" value="RIBOSOMAL RNA SMALL SUBUNIT METHYLTRANSFERASE C"/>
    <property type="match status" value="1"/>
</dbReference>
<dbReference type="Pfam" id="PF05175">
    <property type="entry name" value="MTS"/>
    <property type="match status" value="1"/>
</dbReference>
<dbReference type="Pfam" id="PF08468">
    <property type="entry name" value="MTS_N"/>
    <property type="match status" value="1"/>
</dbReference>
<dbReference type="SUPFAM" id="SSF53335">
    <property type="entry name" value="S-adenosyl-L-methionine-dependent methyltransferases"/>
    <property type="match status" value="1"/>
</dbReference>
<comment type="function">
    <text evidence="2">Specifically methylates the guanine in position 1207 of 16S rRNA in the 30S particle.</text>
</comment>
<comment type="catalytic activity">
    <reaction evidence="2">
        <text>guanosine(1207) in 16S rRNA + S-adenosyl-L-methionine = N(2)-methylguanosine(1207) in 16S rRNA + S-adenosyl-L-homocysteine + H(+)</text>
        <dbReference type="Rhea" id="RHEA:42736"/>
        <dbReference type="Rhea" id="RHEA-COMP:10213"/>
        <dbReference type="Rhea" id="RHEA-COMP:10214"/>
        <dbReference type="ChEBI" id="CHEBI:15378"/>
        <dbReference type="ChEBI" id="CHEBI:57856"/>
        <dbReference type="ChEBI" id="CHEBI:59789"/>
        <dbReference type="ChEBI" id="CHEBI:74269"/>
        <dbReference type="ChEBI" id="CHEBI:74481"/>
        <dbReference type="EC" id="2.1.1.172"/>
    </reaction>
    <physiologicalReaction direction="left-to-right" evidence="2">
        <dbReference type="Rhea" id="RHEA:42737"/>
    </physiologicalReaction>
</comment>
<comment type="cofactor">
    <cofactor>
        <name>Mg(2+)</name>
        <dbReference type="ChEBI" id="CHEBI:18420"/>
    </cofactor>
</comment>
<comment type="subunit">
    <text evidence="1">Monomer.</text>
</comment>
<comment type="subcellular location">
    <subcellularLocation>
        <location evidence="3">Cytoplasm</location>
    </subcellularLocation>
</comment>
<comment type="similarity">
    <text evidence="3">Belongs to the methyltransferase superfamily. RsmC family.</text>
</comment>
<protein>
    <recommendedName>
        <fullName>Ribosomal RNA small subunit methyltransferase C</fullName>
        <ecNumber evidence="2">2.1.1.172</ecNumber>
    </recommendedName>
    <alternativeName>
        <fullName>16S rRNA m2G1207 methyltransferase</fullName>
    </alternativeName>
    <alternativeName>
        <fullName>rRNA (guanine-N(2)-)-methyltransferase RsmC</fullName>
    </alternativeName>
</protein>
<organism>
    <name type="scientific">Escherichia coli (strain K12)</name>
    <dbReference type="NCBI Taxonomy" id="83333"/>
    <lineage>
        <taxon>Bacteria</taxon>
        <taxon>Pseudomonadati</taxon>
        <taxon>Pseudomonadota</taxon>
        <taxon>Gammaproteobacteria</taxon>
        <taxon>Enterobacterales</taxon>
        <taxon>Enterobacteriaceae</taxon>
        <taxon>Escherichia</taxon>
    </lineage>
</organism>
<name>RSMC_ECOLI</name>
<evidence type="ECO:0000269" key="1">
    <source>
    </source>
</evidence>
<evidence type="ECO:0000269" key="2">
    <source>
    </source>
</evidence>
<evidence type="ECO:0000305" key="3"/>
<evidence type="ECO:0007829" key="4">
    <source>
        <dbReference type="PDB" id="2PJD"/>
    </source>
</evidence>
<gene>
    <name type="primary">rsmC</name>
    <name type="synonym">yjjT</name>
    <name type="ordered locus">b4371</name>
    <name type="ordered locus">JW4333</name>
</gene>